<sequence length="603" mass="67670">MAMNHHQRRSVPRLLTPIALSIVLSACSTQPSSPDVVDITAQPLLTAQTYLMRADASQGNQQNDWLIMALKAAIEENNPDQAQLLIMRLAKQPLTPTQQAQWQLLRAQLLANTEQYQEALEQLSFQANWSLPQVQWQQYHQLRADIFTALDRSFDSTRELVALYGLSSNKDKEALADQIWANLNHYSASKIIKLSTEPDEAQLDGWLQLAIYMKTLGSDLPQLKNTLEKWLAENPQHPAAIYTPKAITDILALEIVKPTNTALLLPLTGKFAKQAQFIRDGFVFAMMNDADRQTNATLTIIDTNAETLESVDAILTSKQIDFVVGPLIKGNIEKLQQFQQSRGQMIPTLALNIPDQIDTTAGACYLALSPEQEVAQAAKHLFTQGYRYPLILAPQNAYGERVVEAFNEEWRRYSKNKVAVNLFGDKRQLQRNINSIFGLQDSQQNIAQMESLLGMGLESQPRSRRDIDAVYIVANSSELTLIKPFIEVAINPDTRPPKLFSNSNSNTGGRQYEDLSGVTYSDIPLLIQPAPSIKEQLTQIWPESSNAERRLQALGMDAYRLMVELPQMKIVEGYTIDGQTGVLSIDEQCVVQREISWAEHGVR</sequence>
<evidence type="ECO:0000255" key="1">
    <source>
        <dbReference type="HAMAP-Rule" id="MF_01890"/>
    </source>
</evidence>
<evidence type="ECO:0000305" key="2"/>
<organism>
    <name type="scientific">Vibrio cholerae serotype O1 (strain MJ-1236)</name>
    <dbReference type="NCBI Taxonomy" id="593588"/>
    <lineage>
        <taxon>Bacteria</taxon>
        <taxon>Pseudomonadati</taxon>
        <taxon>Pseudomonadota</taxon>
        <taxon>Gammaproteobacteria</taxon>
        <taxon>Vibrionales</taxon>
        <taxon>Vibrionaceae</taxon>
        <taxon>Vibrio</taxon>
    </lineage>
</organism>
<accession>C3NVZ3</accession>
<reference key="1">
    <citation type="journal article" date="2009" name="Proc. Natl. Acad. Sci. U.S.A.">
        <title>Comparative genomics reveals mechanism for short-term and long-term clonal transitions in pandemic Vibrio cholerae.</title>
        <authorList>
            <person name="Chun J."/>
            <person name="Grim C.J."/>
            <person name="Hasan N.A."/>
            <person name="Lee J.H."/>
            <person name="Choi S.Y."/>
            <person name="Haley B.J."/>
            <person name="Taviani E."/>
            <person name="Jeon Y.-S."/>
            <person name="Kim D.W."/>
            <person name="Lee J.-H."/>
            <person name="Brettin T.S."/>
            <person name="Bruce D.C."/>
            <person name="Challacombe J.F."/>
            <person name="Detter J.C."/>
            <person name="Han C.S."/>
            <person name="Munk A.C."/>
            <person name="Chertkov O."/>
            <person name="Meincke L."/>
            <person name="Saunders E."/>
            <person name="Walters R.A."/>
            <person name="Huq A."/>
            <person name="Nair G.B."/>
            <person name="Colwell R.R."/>
        </authorList>
    </citation>
    <scope>NUCLEOTIDE SEQUENCE [LARGE SCALE GENOMIC DNA]</scope>
    <source>
        <strain>MJ-1236</strain>
    </source>
</reference>
<proteinExistence type="inferred from homology"/>
<comment type="function">
    <text evidence="1">Regulator of peptidoglycan synthesis that is essential for the function of penicillin-binding protein 1A (PBP1a).</text>
</comment>
<comment type="subunit">
    <text evidence="1">Interacts with PBP1a.</text>
</comment>
<comment type="subcellular location">
    <subcellularLocation>
        <location evidence="1">Cell outer membrane</location>
        <topology evidence="1">Lipid-anchor</topology>
        <orientation evidence="1">Periplasmic side</orientation>
    </subcellularLocation>
</comment>
<comment type="similarity">
    <text evidence="1">Belongs to the LpoA family.</text>
</comment>
<comment type="sequence caution" evidence="2">
    <conflict type="erroneous initiation">
        <sequence resource="EMBL-CDS" id="ACQ59210"/>
    </conflict>
    <text>Extended N-terminus.</text>
</comment>
<feature type="signal peptide" evidence="1">
    <location>
        <begin position="1"/>
        <end position="26"/>
    </location>
</feature>
<feature type="chain" id="PRO_0000405949" description="Penicillin-binding protein activator LpoA">
    <location>
        <begin position="27"/>
        <end position="603"/>
    </location>
</feature>
<feature type="lipid moiety-binding region" description="N-palmitoyl cysteine" evidence="1">
    <location>
        <position position="27"/>
    </location>
</feature>
<feature type="lipid moiety-binding region" description="S-diacylglycerol cysteine" evidence="1">
    <location>
        <position position="27"/>
    </location>
</feature>
<keyword id="KW-0998">Cell outer membrane</keyword>
<keyword id="KW-0133">Cell shape</keyword>
<keyword id="KW-0449">Lipoprotein</keyword>
<keyword id="KW-0472">Membrane</keyword>
<keyword id="KW-0564">Palmitate</keyword>
<keyword id="KW-0573">Peptidoglycan synthesis</keyword>
<keyword id="KW-0732">Signal</keyword>
<name>LPOA_VIBCJ</name>
<dbReference type="EMBL" id="CP001485">
    <property type="protein sequence ID" value="ACQ59210.1"/>
    <property type="status" value="ALT_INIT"/>
    <property type="molecule type" value="Genomic_DNA"/>
</dbReference>
<dbReference type="SMR" id="C3NVZ3"/>
<dbReference type="KEGG" id="vcj:VCD_001027"/>
<dbReference type="HOGENOM" id="CLU_026091_1_0_6"/>
<dbReference type="GO" id="GO:0031241">
    <property type="term" value="C:periplasmic side of cell outer membrane"/>
    <property type="evidence" value="ECO:0007669"/>
    <property type="project" value="UniProtKB-UniRule"/>
</dbReference>
<dbReference type="GO" id="GO:0030234">
    <property type="term" value="F:enzyme regulator activity"/>
    <property type="evidence" value="ECO:0007669"/>
    <property type="project" value="UniProtKB-UniRule"/>
</dbReference>
<dbReference type="GO" id="GO:0009252">
    <property type="term" value="P:peptidoglycan biosynthetic process"/>
    <property type="evidence" value="ECO:0007669"/>
    <property type="project" value="UniProtKB-UniRule"/>
</dbReference>
<dbReference type="GO" id="GO:0008360">
    <property type="term" value="P:regulation of cell shape"/>
    <property type="evidence" value="ECO:0007669"/>
    <property type="project" value="UniProtKB-KW"/>
</dbReference>
<dbReference type="CDD" id="cd06339">
    <property type="entry name" value="PBP1_YraM_LppC_lipoprotein-like"/>
    <property type="match status" value="1"/>
</dbReference>
<dbReference type="Gene3D" id="1.25.40.650">
    <property type="match status" value="1"/>
</dbReference>
<dbReference type="Gene3D" id="3.40.50.2300">
    <property type="match status" value="2"/>
</dbReference>
<dbReference type="Gene3D" id="1.25.40.10">
    <property type="entry name" value="Tetratricopeptide repeat domain"/>
    <property type="match status" value="1"/>
</dbReference>
<dbReference type="HAMAP" id="MF_01890">
    <property type="entry name" value="LpoA"/>
    <property type="match status" value="1"/>
</dbReference>
<dbReference type="InterPro" id="IPR007443">
    <property type="entry name" value="LpoA"/>
</dbReference>
<dbReference type="InterPro" id="IPR028082">
    <property type="entry name" value="Peripla_BP_I"/>
</dbReference>
<dbReference type="InterPro" id="IPR011990">
    <property type="entry name" value="TPR-like_helical_dom_sf"/>
</dbReference>
<dbReference type="PANTHER" id="PTHR38038">
    <property type="entry name" value="PENICILLIN-BINDING PROTEIN ACTIVATOR LPOA"/>
    <property type="match status" value="1"/>
</dbReference>
<dbReference type="PANTHER" id="PTHR38038:SF1">
    <property type="entry name" value="PENICILLIN-BINDING PROTEIN ACTIVATOR LPOA"/>
    <property type="match status" value="1"/>
</dbReference>
<dbReference type="Pfam" id="PF04348">
    <property type="entry name" value="LppC"/>
    <property type="match status" value="1"/>
</dbReference>
<dbReference type="SUPFAM" id="SSF53822">
    <property type="entry name" value="Periplasmic binding protein-like I"/>
    <property type="match status" value="1"/>
</dbReference>
<gene>
    <name evidence="1" type="primary">lpoA</name>
    <name type="ordered locus">VCD_001027</name>
</gene>
<protein>
    <recommendedName>
        <fullName evidence="1">Penicillin-binding protein activator LpoA</fullName>
        <shortName evidence="1">PBP activator LpoA</shortName>
    </recommendedName>
</protein>